<keyword id="KW-0001">2Fe-2S</keyword>
<keyword id="KW-0028">Amino-acid biosynthesis</keyword>
<keyword id="KW-0100">Branched-chain amino acid biosynthesis</keyword>
<keyword id="KW-0408">Iron</keyword>
<keyword id="KW-0411">Iron-sulfur</keyword>
<keyword id="KW-0456">Lyase</keyword>
<keyword id="KW-0460">Magnesium</keyword>
<keyword id="KW-0479">Metal-binding</keyword>
<keyword id="KW-0496">Mitochondrion</keyword>
<keyword id="KW-1185">Reference proteome</keyword>
<keyword id="KW-0809">Transit peptide</keyword>
<organism>
    <name type="scientific">Saccharomyces cerevisiae (strain ATCC 204508 / S288c)</name>
    <name type="common">Baker's yeast</name>
    <dbReference type="NCBI Taxonomy" id="559292"/>
    <lineage>
        <taxon>Eukaryota</taxon>
        <taxon>Fungi</taxon>
        <taxon>Dikarya</taxon>
        <taxon>Ascomycota</taxon>
        <taxon>Saccharomycotina</taxon>
        <taxon>Saccharomycetes</taxon>
        <taxon>Saccharomycetales</taxon>
        <taxon>Saccharomycetaceae</taxon>
        <taxon>Saccharomyces</taxon>
    </lineage>
</organism>
<protein>
    <recommendedName>
        <fullName evidence="17">Dihydroxy-acid dehydratase, mitochondrial</fullName>
        <shortName evidence="17">DAD</shortName>
        <ecNumber evidence="6 12">4.2.1.9</ecNumber>
    </recommendedName>
</protein>
<comment type="function">
    <text evidence="6 7 8 9 10 11 12 13 14 15 16 21">Dihydroxyacid dehydratase that catalyzes the third step in the common pathway leading to biosynthesis of branched-chain amino acids (PubMed:20008079, PubMed:21798060, PubMed:21987576, PubMed:22954227, PubMed:25280745, PubMed:26543501, PubMed:27532773, PubMed:28505306, PubMed:30850698, PubMed:31303893, PubMed:33620449, PubMed:8299945). Catalyzes the dehydration of (2R,3R)-2,3-dihydroxy-3-methylpentanoate (2,3-dihydroxy-3-methylvalerate) into 2-oxo-3-methylpentanoate (2-oxo-3-methylvalerate) and of (2R)-2,3-dihydroxy-3-methylbutanoate (2,3-dihydroxyisovalerate) into 2-oxo-3-methylbutanoate (2-oxoisovalerate), the penultimate precursor to L-isoleucine and L-valine, respectively (PubMed:20008079, PubMed:27532773). Required for the synthesis of alpha-isopropylmalate which modulates the activity of LEU3 and subsequently regulates the expression of LEU1 (PubMed:20008079).</text>
</comment>
<comment type="catalytic activity">
    <reaction evidence="6 12">
        <text>(2R)-2,3-dihydroxy-3-methylbutanoate = 3-methyl-2-oxobutanoate + H2O</text>
        <dbReference type="Rhea" id="RHEA:24809"/>
        <dbReference type="ChEBI" id="CHEBI:11851"/>
        <dbReference type="ChEBI" id="CHEBI:15377"/>
        <dbReference type="ChEBI" id="CHEBI:49072"/>
        <dbReference type="EC" id="4.2.1.9"/>
    </reaction>
    <physiologicalReaction direction="left-to-right" evidence="19 20">
        <dbReference type="Rhea" id="RHEA:24810"/>
    </physiologicalReaction>
</comment>
<comment type="catalytic activity">
    <reaction evidence="1">
        <text>(2R,3R)-2,3-dihydroxy-3-methylpentanoate = (S)-3-methyl-2-oxopentanoate + H2O</text>
        <dbReference type="Rhea" id="RHEA:27694"/>
        <dbReference type="ChEBI" id="CHEBI:15377"/>
        <dbReference type="ChEBI" id="CHEBI:35146"/>
        <dbReference type="ChEBI" id="CHEBI:49258"/>
        <dbReference type="EC" id="4.2.1.9"/>
    </reaction>
    <physiologicalReaction direction="left-to-right" evidence="1">
        <dbReference type="Rhea" id="RHEA:27695"/>
    </physiologicalReaction>
</comment>
<comment type="cofactor">
    <cofactor evidence="8 12">
        <name>[2Fe-2S] cluster</name>
        <dbReference type="ChEBI" id="CHEBI:190135"/>
    </cofactor>
    <text evidence="8 12">Binds 1 [2Fe-2S] cluster per subunit.</text>
</comment>
<comment type="cofactor">
    <cofactor evidence="2">
        <name>Mg(2+)</name>
        <dbReference type="ChEBI" id="CHEBI:18420"/>
    </cofactor>
</comment>
<comment type="activity regulation">
    <text evidence="6">Catalytic activity is inactivated under iron-limiting conditions.</text>
</comment>
<comment type="pathway">
    <text evidence="18">Amino-acid biosynthesis; L-isoleucine biosynthesis; L-isoleucine from 2-oxobutanoate: step 3/4.</text>
</comment>
<comment type="pathway">
    <text evidence="18">Amino-acid biosynthesis; L-valine biosynthesis; L-valine from pyruvate: step 3/4.</text>
</comment>
<comment type="subcellular location">
    <subcellularLocation>
        <location evidence="6 9">Mitochondrion</location>
    </subcellularLocation>
</comment>
<comment type="induction">
    <text evidence="5">Expression is significantly repressed when the pH changes from pH 5.0 to 3.0.</text>
</comment>
<comment type="disruption phenotype">
    <text evidence="6">Strongly reduces the iron responsiveness of expression of LEU1 by affecting the synthesis of alpha-isopropylmalate.</text>
</comment>
<comment type="biotechnology">
    <text evidence="7 9 10 11 13 14 15">The branched chain alcohol isobutanol exhibits superior physicochemical properties as an alternative biofuel (PubMed:21798060, PubMed:22954227, PubMed:25280745, PubMed:26543501, PubMed:28505306, PubMed:30850698, PubMed:31303893). Overexpression of isobutanol pathway enzymes such as ILV3 can enhance production of alcohol precursors and are of great interest for biofuel production (PubMed:21798060, PubMed:22954227, PubMed:25280745, PubMed:26543501, PubMed:28505306, PubMed:30850698, PubMed:31303893).</text>
</comment>
<comment type="miscellaneous">
    <text evidence="4">Present with 171000 molecules/cell in log phase SD medium.</text>
</comment>
<comment type="similarity">
    <text evidence="18">Belongs to the IlvD/Edd family.</text>
</comment>
<name>ILV3_YEAST</name>
<dbReference type="EC" id="4.2.1.9" evidence="6 12"/>
<dbReference type="EMBL" id="X87611">
    <property type="protein sequence ID" value="CAA60939.1"/>
    <property type="molecule type" value="Genomic_DNA"/>
</dbReference>
<dbReference type="EMBL" id="Z49516">
    <property type="protein sequence ID" value="CAA89540.1"/>
    <property type="molecule type" value="Genomic_DNA"/>
</dbReference>
<dbReference type="EMBL" id="L13975">
    <property type="protein sequence ID" value="AAA34568.1"/>
    <property type="molecule type" value="Genomic_DNA"/>
</dbReference>
<dbReference type="EMBL" id="BK006943">
    <property type="protein sequence ID" value="DAA08808.1"/>
    <property type="molecule type" value="Genomic_DNA"/>
</dbReference>
<dbReference type="PIR" id="S55205">
    <property type="entry name" value="S55205"/>
</dbReference>
<dbReference type="RefSeq" id="NP_012550.1">
    <property type="nucleotide sequence ID" value="NM_001181674.1"/>
</dbReference>
<dbReference type="SMR" id="P39522"/>
<dbReference type="BioGRID" id="33772">
    <property type="interactions" value="183"/>
</dbReference>
<dbReference type="DIP" id="DIP-6456N"/>
<dbReference type="FunCoup" id="P39522">
    <property type="interactions" value="603"/>
</dbReference>
<dbReference type="IntAct" id="P39522">
    <property type="interactions" value="65"/>
</dbReference>
<dbReference type="MINT" id="P39522"/>
<dbReference type="STRING" id="4932.YJR016C"/>
<dbReference type="iPTMnet" id="P39522"/>
<dbReference type="PaxDb" id="4932-YJR016C"/>
<dbReference type="PeptideAtlas" id="P39522"/>
<dbReference type="TopDownProteomics" id="P39522"/>
<dbReference type="EnsemblFungi" id="YJR016C_mRNA">
    <property type="protein sequence ID" value="YJR016C"/>
    <property type="gene ID" value="YJR016C"/>
</dbReference>
<dbReference type="GeneID" id="853473"/>
<dbReference type="KEGG" id="sce:YJR016C"/>
<dbReference type="AGR" id="SGD:S000003777"/>
<dbReference type="SGD" id="S000003777">
    <property type="gene designation" value="ILV3"/>
</dbReference>
<dbReference type="VEuPathDB" id="FungiDB:YJR016C"/>
<dbReference type="eggNOG" id="KOG2448">
    <property type="taxonomic scope" value="Eukaryota"/>
</dbReference>
<dbReference type="HOGENOM" id="CLU_014271_4_1_1"/>
<dbReference type="InParanoid" id="P39522"/>
<dbReference type="OMA" id="STQGRNM"/>
<dbReference type="OrthoDB" id="3851628at2759"/>
<dbReference type="BioCyc" id="YEAST:YJR016C-MONOMER"/>
<dbReference type="UniPathway" id="UPA00047">
    <property type="reaction ID" value="UER00057"/>
</dbReference>
<dbReference type="UniPathway" id="UPA00049">
    <property type="reaction ID" value="UER00061"/>
</dbReference>
<dbReference type="BioGRID-ORCS" id="853473">
    <property type="hits" value="8 hits in 10 CRISPR screens"/>
</dbReference>
<dbReference type="PRO" id="PR:P39522"/>
<dbReference type="Proteomes" id="UP000002311">
    <property type="component" value="Chromosome X"/>
</dbReference>
<dbReference type="RNAct" id="P39522">
    <property type="molecule type" value="protein"/>
</dbReference>
<dbReference type="GO" id="GO:0005739">
    <property type="term" value="C:mitochondrion"/>
    <property type="evidence" value="ECO:0007005"/>
    <property type="project" value="SGD"/>
</dbReference>
<dbReference type="GO" id="GO:0051537">
    <property type="term" value="F:2 iron, 2 sulfur cluster binding"/>
    <property type="evidence" value="ECO:0007669"/>
    <property type="project" value="UniProtKB-KW"/>
</dbReference>
<dbReference type="GO" id="GO:0004160">
    <property type="term" value="F:dihydroxy-acid dehydratase activity"/>
    <property type="evidence" value="ECO:0000315"/>
    <property type="project" value="SGD"/>
</dbReference>
<dbReference type="GO" id="GO:0046872">
    <property type="term" value="F:metal ion binding"/>
    <property type="evidence" value="ECO:0007669"/>
    <property type="project" value="UniProtKB-KW"/>
</dbReference>
<dbReference type="GO" id="GO:0009082">
    <property type="term" value="P:branched-chain amino acid biosynthetic process"/>
    <property type="evidence" value="ECO:0000315"/>
    <property type="project" value="SGD"/>
</dbReference>
<dbReference type="GO" id="GO:0009097">
    <property type="term" value="P:isoleucine biosynthetic process"/>
    <property type="evidence" value="ECO:0007669"/>
    <property type="project" value="UniProtKB-UniPathway"/>
</dbReference>
<dbReference type="GO" id="GO:0009099">
    <property type="term" value="P:L-valine biosynthetic process"/>
    <property type="evidence" value="ECO:0007669"/>
    <property type="project" value="UniProtKB-UniPathway"/>
</dbReference>
<dbReference type="FunFam" id="3.50.30.80:FF:000001">
    <property type="entry name" value="Dihydroxy-acid dehydratase"/>
    <property type="match status" value="1"/>
</dbReference>
<dbReference type="Gene3D" id="3.50.30.80">
    <property type="entry name" value="IlvD/EDD C-terminal domain-like"/>
    <property type="match status" value="1"/>
</dbReference>
<dbReference type="HAMAP" id="MF_00012">
    <property type="entry name" value="IlvD"/>
    <property type="match status" value="1"/>
</dbReference>
<dbReference type="InterPro" id="IPR050165">
    <property type="entry name" value="DHAD_IlvD/Edd"/>
</dbReference>
<dbReference type="InterPro" id="IPR042096">
    <property type="entry name" value="Dihydro-acid_dehy_C"/>
</dbReference>
<dbReference type="InterPro" id="IPR004404">
    <property type="entry name" value="DihydroxyA_deHydtase"/>
</dbReference>
<dbReference type="InterPro" id="IPR020558">
    <property type="entry name" value="DiOHA_6PGluconate_deHydtase_CS"/>
</dbReference>
<dbReference type="InterPro" id="IPR056740">
    <property type="entry name" value="ILV_EDD_C"/>
</dbReference>
<dbReference type="InterPro" id="IPR000581">
    <property type="entry name" value="ILV_EDD_N"/>
</dbReference>
<dbReference type="InterPro" id="IPR037237">
    <property type="entry name" value="IlvD/EDD_N"/>
</dbReference>
<dbReference type="NCBIfam" id="TIGR00110">
    <property type="entry name" value="ilvD"/>
    <property type="match status" value="1"/>
</dbReference>
<dbReference type="NCBIfam" id="NF002068">
    <property type="entry name" value="PRK00911.1"/>
    <property type="match status" value="1"/>
</dbReference>
<dbReference type="PANTHER" id="PTHR21000">
    <property type="entry name" value="DIHYDROXY-ACID DEHYDRATASE DAD"/>
    <property type="match status" value="1"/>
</dbReference>
<dbReference type="PANTHER" id="PTHR21000:SF5">
    <property type="entry name" value="DIHYDROXY-ACID DEHYDRATASE, MITOCHONDRIAL"/>
    <property type="match status" value="1"/>
</dbReference>
<dbReference type="Pfam" id="PF24877">
    <property type="entry name" value="ILV_EDD_C"/>
    <property type="match status" value="1"/>
</dbReference>
<dbReference type="Pfam" id="PF00920">
    <property type="entry name" value="ILVD_EDD_N"/>
    <property type="match status" value="1"/>
</dbReference>
<dbReference type="SUPFAM" id="SSF143975">
    <property type="entry name" value="IlvD/EDD N-terminal domain-like"/>
    <property type="match status" value="1"/>
</dbReference>
<dbReference type="SUPFAM" id="SSF52016">
    <property type="entry name" value="LeuD/IlvD-like"/>
    <property type="match status" value="1"/>
</dbReference>
<dbReference type="PROSITE" id="PS00886">
    <property type="entry name" value="ILVD_EDD_1"/>
    <property type="match status" value="1"/>
</dbReference>
<dbReference type="PROSITE" id="PS00887">
    <property type="entry name" value="ILVD_EDD_2"/>
    <property type="match status" value="1"/>
</dbReference>
<gene>
    <name evidence="17" type="primary">ILV3</name>
    <name type="ordered locus">YJR016C</name>
    <name type="ORF">J1450</name>
</gene>
<accession>P39522</accession>
<accession>D6VWJ2</accession>
<proteinExistence type="evidence at protein level"/>
<evidence type="ECO:0000250" key="1">
    <source>
        <dbReference type="UniProtKB" id="P05791"/>
    </source>
</evidence>
<evidence type="ECO:0000250" key="2">
    <source>
        <dbReference type="UniProtKB" id="P9WKJ5"/>
    </source>
</evidence>
<evidence type="ECO:0000255" key="3"/>
<evidence type="ECO:0000269" key="4">
    <source>
    </source>
</evidence>
<evidence type="ECO:0000269" key="5">
    <source>
    </source>
</evidence>
<evidence type="ECO:0000269" key="6">
    <source>
    </source>
</evidence>
<evidence type="ECO:0000269" key="7">
    <source>
    </source>
</evidence>
<evidence type="ECO:0000269" key="8">
    <source>
    </source>
</evidence>
<evidence type="ECO:0000269" key="9">
    <source>
    </source>
</evidence>
<evidence type="ECO:0000269" key="10">
    <source>
    </source>
</evidence>
<evidence type="ECO:0000269" key="11">
    <source>
    </source>
</evidence>
<evidence type="ECO:0000269" key="12">
    <source>
    </source>
</evidence>
<evidence type="ECO:0000269" key="13">
    <source>
    </source>
</evidence>
<evidence type="ECO:0000269" key="14">
    <source>
    </source>
</evidence>
<evidence type="ECO:0000269" key="15">
    <source>
    </source>
</evidence>
<evidence type="ECO:0000269" key="16">
    <source>
    </source>
</evidence>
<evidence type="ECO:0000303" key="17">
    <source>
    </source>
</evidence>
<evidence type="ECO:0000305" key="18"/>
<evidence type="ECO:0000305" key="19">
    <source>
    </source>
</evidence>
<evidence type="ECO:0000305" key="20">
    <source>
    </source>
</evidence>
<evidence type="ECO:0000305" key="21">
    <source>
    </source>
</evidence>
<reference key="1">
    <citation type="journal article" date="1996" name="EMBO J.">
        <title>Complete nucleotide sequence of Saccharomyces cerevisiae chromosome X.</title>
        <authorList>
            <person name="Galibert F."/>
            <person name="Alexandraki D."/>
            <person name="Baur A."/>
            <person name="Boles E."/>
            <person name="Chalwatzis N."/>
            <person name="Chuat J.-C."/>
            <person name="Coster F."/>
            <person name="Cziepluch C."/>
            <person name="de Haan M."/>
            <person name="Domdey H."/>
            <person name="Durand P."/>
            <person name="Entian K.-D."/>
            <person name="Gatius M."/>
            <person name="Goffeau A."/>
            <person name="Grivell L.A."/>
            <person name="Hennemann A."/>
            <person name="Herbert C.J."/>
            <person name="Heumann K."/>
            <person name="Hilger F."/>
            <person name="Hollenberg C.P."/>
            <person name="Huang M.-E."/>
            <person name="Jacq C."/>
            <person name="Jauniaux J.-C."/>
            <person name="Katsoulou C."/>
            <person name="Kirchrath L."/>
            <person name="Kleine K."/>
            <person name="Kordes E."/>
            <person name="Koetter P."/>
            <person name="Liebl S."/>
            <person name="Louis E.J."/>
            <person name="Manus V."/>
            <person name="Mewes H.-W."/>
            <person name="Miosga T."/>
            <person name="Obermaier B."/>
            <person name="Perea J."/>
            <person name="Pohl T.M."/>
            <person name="Portetelle D."/>
            <person name="Pujol A."/>
            <person name="Purnelle B."/>
            <person name="Ramezani Rad M."/>
            <person name="Rasmussen S.W."/>
            <person name="Rose M."/>
            <person name="Rossau R."/>
            <person name="Schaaff-Gerstenschlaeger I."/>
            <person name="Smits P.H.M."/>
            <person name="Scarcez T."/>
            <person name="Soriano N."/>
            <person name="To Van D."/>
            <person name="Tzermia M."/>
            <person name="Van Broekhoven A."/>
            <person name="Vandenbol M."/>
            <person name="Wedler H."/>
            <person name="von Wettstein D."/>
            <person name="Wambutt R."/>
            <person name="Zagulski M."/>
            <person name="Zollner A."/>
            <person name="Karpfinger-Hartl L."/>
        </authorList>
    </citation>
    <scope>NUCLEOTIDE SEQUENCE [LARGE SCALE GENOMIC DNA]</scope>
    <source>
        <strain>ATCC 204508 / S288c</strain>
    </source>
</reference>
<reference key="2">
    <citation type="journal article" date="2014" name="G3 (Bethesda)">
        <title>The reference genome sequence of Saccharomyces cerevisiae: Then and now.</title>
        <authorList>
            <person name="Engel S.R."/>
            <person name="Dietrich F.S."/>
            <person name="Fisk D.G."/>
            <person name="Binkley G."/>
            <person name="Balakrishnan R."/>
            <person name="Costanzo M.C."/>
            <person name="Dwight S.S."/>
            <person name="Hitz B.C."/>
            <person name="Karra K."/>
            <person name="Nash R.S."/>
            <person name="Weng S."/>
            <person name="Wong E.D."/>
            <person name="Lloyd P."/>
            <person name="Skrzypek M.S."/>
            <person name="Miyasato S.R."/>
            <person name="Simison M."/>
            <person name="Cherry J.M."/>
        </authorList>
    </citation>
    <scope>GENOME REANNOTATION</scope>
    <source>
        <strain>ATCC 204508 / S288c</strain>
    </source>
</reference>
<reference key="3">
    <citation type="journal article" date="1993" name="Gene">
        <title>Cloning of the dihydroxyacid dehydratase-encoding gene (ILV3) from Saccharomyces cerevisiae.</title>
        <authorList>
            <person name="Velasco J.A."/>
            <person name="Cansado J."/>
            <person name="Pena M.C."/>
            <person name="Kawakami T."/>
            <person name="Laborda J."/>
            <person name="Notario V."/>
        </authorList>
    </citation>
    <scope>NUCLEOTIDE SEQUENCE [GENOMIC DNA] OF 82-585</scope>
    <scope>FUNCTION</scope>
    <source>
        <strain>ATCC 26109 / X2180</strain>
    </source>
</reference>
<reference key="4">
    <citation type="journal article" date="2003" name="Nature">
        <title>Global analysis of protein expression in yeast.</title>
        <authorList>
            <person name="Ghaemmaghami S."/>
            <person name="Huh W.-K."/>
            <person name="Bower K."/>
            <person name="Howson R.W."/>
            <person name="Belle A."/>
            <person name="Dephoure N."/>
            <person name="O'Shea E.K."/>
            <person name="Weissman J.S."/>
        </authorList>
    </citation>
    <scope>LEVEL OF PROTEIN EXPRESSION [LARGE SCALE ANALYSIS]</scope>
</reference>
<reference key="5">
    <citation type="journal article" date="2006" name="Appl. Microbiol. Biotechnol.">
        <title>Rapid identification of target genes for 3-methyl-1-butanol production in Saccharomyces cerevisiae.</title>
        <authorList>
            <person name="Schoondermark-Stolk S.A."/>
            <person name="Jansen M."/>
            <person name="Veurink J.H."/>
            <person name="Verkleij A.J."/>
            <person name="Verrips C.T."/>
            <person name="Euverink G.J."/>
            <person name="Boonstra J."/>
            <person name="Dijkhuizen L."/>
        </authorList>
    </citation>
    <scope>INDUCTION</scope>
</reference>
<reference key="6">
    <citation type="journal article" date="2010" name="Eukaryot. Cell">
        <title>Iron regulation through the back door: iron-dependent metabolite levels contribute to transcriptional adaptation to iron deprivation in Saccharomyces cerevisiae.</title>
        <authorList>
            <person name="Ihrig J."/>
            <person name="Hausmann A."/>
            <person name="Hain A."/>
            <person name="Richter N."/>
            <person name="Hamza I."/>
            <person name="Lill R."/>
            <person name="Muehlenhoff U."/>
        </authorList>
    </citation>
    <scope>FUNCTION</scope>
    <scope>CATALYTIC ACTIVITY</scope>
    <scope>ACTIVITY REGULATION</scope>
    <scope>DISRUPTION PHENOTYPE</scope>
    <scope>SUBCELLULAR LOCATION</scope>
</reference>
<reference key="7">
    <citation type="journal article" date="2011" name="Biotechnol. Biofuels">
        <title>Increased isobutanol production in Saccharomyces cerevisiae by overexpression of genes in valine metabolism.</title>
        <authorList>
            <person name="Chen X."/>
            <person name="Nielsen K.F."/>
            <person name="Borodina I."/>
            <person name="Kielland-Brandt M.C."/>
            <person name="Karhumaa K."/>
        </authorList>
    </citation>
    <scope>FUNCTION</scope>
    <scope>BIOTECHNOLOGY</scope>
</reference>
<reference key="8">
    <citation type="journal article" date="2011" name="J. Biol. Chem.">
        <title>Specialized function of yeast Isa1 and Isa2 proteins in the maturation of mitochondrial [4Fe-4S] proteins.</title>
        <authorList>
            <person name="Muehlenhoff U."/>
            <person name="Richter N."/>
            <person name="Pines O."/>
            <person name="Pierik A.J."/>
            <person name="Lill R."/>
        </authorList>
    </citation>
    <scope>FUNCTION</scope>
    <scope>COFACTOR</scope>
</reference>
<reference key="9">
    <citation type="journal article" date="2012" name="Biotechnol. Biofuels">
        <title>Cytosolic re-localization and optimization of valine synthesis and catabolism enables inseased isobutanol production with the yeast Saccharomyces cerevisiae.</title>
        <authorList>
            <person name="Brat D."/>
            <person name="Weber C."/>
            <person name="Lorenzen W."/>
            <person name="Bode H.B."/>
            <person name="Boles E."/>
        </authorList>
    </citation>
    <scope>FUNCTION</scope>
    <scope>SUBCELLULAR LOCATION</scope>
    <scope>BIOTECHNOLOGY</scope>
</reference>
<reference key="10">
    <citation type="journal article" date="2014" name="Appl. Microbiol. Biotechnol.">
        <title>Metabolic engineering of Saccharomyces cerevisiae for the production of isobutanol and 3-methyl-1-butanol.</title>
        <authorList>
            <person name="Park S.H."/>
            <person name="Kim S."/>
            <person name="Hahn J.S."/>
        </authorList>
    </citation>
    <scope>FUNCTION</scope>
    <scope>BIOTECHNOLOGY</scope>
</reference>
<reference key="11">
    <citation type="journal article" date="2015" name="Biotechnol. Biofuels">
        <title>Metabolic engineering of Saccharomyces cerevisiae for production of fatty acid short- and branched-chain alkyl esters biodiesel.</title>
        <authorList>
            <person name="Teo W.S."/>
            <person name="Ling H."/>
            <person name="Yu A.Q."/>
            <person name="Chang M.W."/>
        </authorList>
    </citation>
    <scope>FUNCTION</scope>
    <scope>BIOTECHNOLOGY</scope>
</reference>
<reference key="12">
    <citation type="journal article" date="2016" name="Elife">
        <title>Role of Nfu1 and Bol3 in iron-sulfur cluster transfer to mitochondrial clients.</title>
        <authorList>
            <person name="Melber A."/>
            <person name="Na U."/>
            <person name="Vashisht A."/>
            <person name="Weiler B.D."/>
            <person name="Lill R."/>
            <person name="Wohlschlegel J.A."/>
            <person name="Winge D.R."/>
        </authorList>
    </citation>
    <scope>FUNCTION</scope>
    <scope>CATALYTIC ACTIVITY</scope>
    <scope>COFACTOR</scope>
</reference>
<reference key="13">
    <citation type="journal article" date="2017" name="FEMS Yeast Res.">
        <title>Secretion of 2,3-dihydroxyisovalerate as a limiting factor for isobutanol production in Saccharomyces cerevisiae.</title>
        <authorList>
            <person name="Generoso W.C."/>
            <person name="Brinek M."/>
            <person name="Dietz H."/>
            <person name="Oreb M."/>
            <person name="Boles E."/>
        </authorList>
    </citation>
    <scope>FUNCTION</scope>
    <scope>BIOTECHNOLOGY</scope>
</reference>
<reference key="14">
    <citation type="journal article" date="2019" name="Biotechnol. Biofuels">
        <title>Improving isobutanol production with the yeast Saccharomyces cerevisiae by successively blocking competing metabolic pathways as well as ethanol and glycerol formation.</title>
        <authorList>
            <person name="Wess J."/>
            <person name="Brinek M."/>
            <person name="Boles E."/>
        </authorList>
    </citation>
    <scope>FUNCTION</scope>
    <scope>BIOTECHNOLOGY</scope>
</reference>
<reference key="15">
    <citation type="journal article" date="2019" name="Sci. Rep.">
        <title>Development of an efficient cytosolic isobutanol production pathway in Saccharomyces cerevisiae by optimizing copy numbers and expression of the pathway genes based on the toxic effect of alpha-acetolactate.</title>
        <authorList>
            <person name="Park S.H."/>
            <person name="Hahn J.S."/>
        </authorList>
    </citation>
    <scope>FUNCTION</scope>
    <scope>BIOTECHNOLOGY</scope>
</reference>
<reference key="16">
    <citation type="journal article" date="2021" name="FEMS Yeast Res.">
        <title>Improving isobutanol tolerance and titers through EMS mutagenesis in Saccharomyces cerevisiae.</title>
        <authorList>
            <person name="Su Y."/>
            <person name="Shao W."/>
            <person name="Zhang A."/>
            <person name="Zhang W."/>
        </authorList>
    </citation>
    <scope>FUNCTION</scope>
</reference>
<feature type="transit peptide" description="Mitochondrion" evidence="3">
    <location>
        <begin position="1"/>
        <end position="20"/>
    </location>
</feature>
<feature type="chain" id="PRO_0000015636" description="Dihydroxy-acid dehydratase, mitochondrial">
    <location>
        <begin position="21"/>
        <end position="585"/>
    </location>
</feature>
<feature type="active site" description="Proton acceptor" evidence="2">
    <location>
        <position position="500"/>
    </location>
</feature>
<feature type="binding site" evidence="2">
    <location>
        <position position="70"/>
    </location>
    <ligand>
        <name>[2Fe-2S] cluster</name>
        <dbReference type="ChEBI" id="CHEBI:190135"/>
    </ligand>
</feature>
<feature type="binding site" evidence="2">
    <location>
        <position position="102"/>
    </location>
    <ligand>
        <name>Mg(2+)</name>
        <dbReference type="ChEBI" id="CHEBI:18420"/>
    </ligand>
</feature>
<feature type="binding site" evidence="2">
    <location>
        <position position="143"/>
    </location>
    <ligand>
        <name>[2Fe-2S] cluster</name>
        <dbReference type="ChEBI" id="CHEBI:190135"/>
    </ligand>
</feature>
<feature type="binding site" evidence="2">
    <location>
        <position position="144"/>
    </location>
    <ligand>
        <name>Mg(2+)</name>
        <dbReference type="ChEBI" id="CHEBI:18420"/>
    </ligand>
</feature>
<feature type="binding site" evidence="2">
    <location>
        <position position="221"/>
    </location>
    <ligand>
        <name>[2Fe-2S] cluster</name>
        <dbReference type="ChEBI" id="CHEBI:190135"/>
    </ligand>
</feature>
<feature type="binding site" evidence="2">
    <location>
        <position position="474"/>
    </location>
    <ligand>
        <name>Mg(2+)</name>
        <dbReference type="ChEBI" id="CHEBI:18420"/>
    </ligand>
</feature>
<feature type="sequence conflict" description="In Ref. 3; AAA34568." evidence="18" ref="3">
    <original>SQSIEKAG</original>
    <variation>MFSIIEKR</variation>
    <location>
        <begin position="82"/>
        <end position="89"/>
    </location>
</feature>
<feature type="sequence conflict" description="In Ref. 3; AAA34568." evidence="18" ref="3">
    <original>G</original>
    <variation>S</variation>
    <location>
        <position position="238"/>
    </location>
</feature>
<feature type="sequence conflict" description="In Ref. 3; AAA34568." evidence="18" ref="3">
    <original>P</original>
    <variation>S</variation>
    <location>
        <position position="242"/>
    </location>
</feature>
<feature type="sequence conflict" description="In Ref. 3; AAA34568." evidence="18" ref="3">
    <original>A</original>
    <variation>T</variation>
    <location>
        <position position="492"/>
    </location>
</feature>
<feature type="sequence conflict" description="In Ref. 3; AAA34568." evidence="18" ref="3">
    <original>P</original>
    <variation>R</variation>
    <location>
        <position position="520"/>
    </location>
</feature>
<feature type="sequence conflict" description="In Ref. 3; AAA34568." evidence="18" ref="3">
    <original>R</original>
    <variation>A</variation>
    <location>
        <position position="551"/>
    </location>
</feature>
<sequence length="585" mass="62861">MGLLTKVATSRQFSTTRCVAKKLNKYSYIITEPKGQGASQAMLYATGFKKEDFKKPQVGVGSCWWSGNPCNMHLLDLNNRCSQSIEKAGLKAMQFNTIGVSDGISMGTKGMRYSLQSREIIADSFETIMMAQHYDANIAIPSCDKNMPGVMMAMGRHNRPSIMVYGGTILPGHPTCGSSKISKNIDIVSAFQSYGEYISKQFTEEEREDVVEHACPGPGSCGGMYTANTMASAAEVLGLTIPNSSSFPAVSKEKLAECDNIGEYIKKTMELGILPRDILTKEAFENAITYVVATGGSTNAVLHLVAVAHSAGVKLSPDDFQRISDTTPLIGDFKPSGKYVMADLINVGGTQSVIKYLYENNMLHGNTMTVTGDTLAERAKKAPSLPEGQEIIKPLSHPIKANGHLQILYGSLAPGGAVGKITGKEGTYFKGRARVFEEEGAFIEALERGEIKKGEKTVVVIRYEGPRGAPGMPEMLKPSSALMGYGLGKDVALLTDGRFSGGSHGFLIGHIVPEAAEGGPIGLVRDGDEIIIDADNNKIDLLVSDKEMAQRKQSWVAPPPRYTRGTLSKYAKLVSNASNGCVLDA</sequence>